<gene>
    <name evidence="1" type="primary">uvrA</name>
    <name type="ordered locus">BruAb1_1110</name>
</gene>
<name>UVRA_BRUAB</name>
<feature type="chain" id="PRO_0000093038" description="UvrABC system protein A">
    <location>
        <begin position="1"/>
        <end position="974"/>
    </location>
</feature>
<feature type="domain" description="ABC transporter 1" evidence="1">
    <location>
        <begin position="331"/>
        <end position="610"/>
    </location>
</feature>
<feature type="domain" description="ABC transporter 2" evidence="1">
    <location>
        <begin position="630"/>
        <end position="959"/>
    </location>
</feature>
<feature type="zinc finger region" description="C4-type" evidence="1">
    <location>
        <begin position="762"/>
        <end position="788"/>
    </location>
</feature>
<feature type="binding site" evidence="1">
    <location>
        <begin position="34"/>
        <end position="41"/>
    </location>
    <ligand>
        <name>ATP</name>
        <dbReference type="ChEBI" id="CHEBI:30616"/>
    </ligand>
</feature>
<feature type="binding site" evidence="1">
    <location>
        <begin position="663"/>
        <end position="670"/>
    </location>
    <ligand>
        <name>ATP</name>
        <dbReference type="ChEBI" id="CHEBI:30616"/>
    </ligand>
</feature>
<evidence type="ECO:0000255" key="1">
    <source>
        <dbReference type="HAMAP-Rule" id="MF_00205"/>
    </source>
</evidence>
<proteinExistence type="inferred from homology"/>
<keyword id="KW-0067">ATP-binding</keyword>
<keyword id="KW-0963">Cytoplasm</keyword>
<keyword id="KW-0227">DNA damage</keyword>
<keyword id="KW-0228">DNA excision</keyword>
<keyword id="KW-0234">DNA repair</keyword>
<keyword id="KW-0238">DNA-binding</keyword>
<keyword id="KW-0267">Excision nuclease</keyword>
<keyword id="KW-0479">Metal-binding</keyword>
<keyword id="KW-0547">Nucleotide-binding</keyword>
<keyword id="KW-0677">Repeat</keyword>
<keyword id="KW-0742">SOS response</keyword>
<keyword id="KW-0862">Zinc</keyword>
<keyword id="KW-0863">Zinc-finger</keyword>
<accession>P0C0Z2</accession>
<accession>Q07433</accession>
<accession>Q57D33</accession>
<reference key="1">
    <citation type="journal article" date="2005" name="J. Bacteriol.">
        <title>Completion of the genome sequence of Brucella abortus and comparison to the highly similar genomes of Brucella melitensis and Brucella suis.</title>
        <authorList>
            <person name="Halling S.M."/>
            <person name="Peterson-Burch B.D."/>
            <person name="Bricker B.J."/>
            <person name="Zuerner R.L."/>
            <person name="Qing Z."/>
            <person name="Li L.-L."/>
            <person name="Kapur V."/>
            <person name="Alt D.P."/>
            <person name="Olsen S.C."/>
        </authorList>
    </citation>
    <scope>NUCLEOTIDE SEQUENCE [LARGE SCALE GENOMIC DNA]</scope>
    <source>
        <strain>9-941</strain>
    </source>
</reference>
<dbReference type="EMBL" id="AE017223">
    <property type="protein sequence ID" value="AAX74451.1"/>
    <property type="molecule type" value="Genomic_DNA"/>
</dbReference>
<dbReference type="RefSeq" id="WP_002964233.1">
    <property type="nucleotide sequence ID" value="NC_006932.1"/>
</dbReference>
<dbReference type="SMR" id="P0C0Z2"/>
<dbReference type="EnsemblBacteria" id="AAX74451">
    <property type="protein sequence ID" value="AAX74451"/>
    <property type="gene ID" value="BruAb1_1110"/>
</dbReference>
<dbReference type="GeneID" id="93016556"/>
<dbReference type="KEGG" id="bmb:BruAb1_1110"/>
<dbReference type="HOGENOM" id="CLU_001370_0_1_5"/>
<dbReference type="PRO" id="PR:P0C0Z2"/>
<dbReference type="Proteomes" id="UP000000540">
    <property type="component" value="Chromosome I"/>
</dbReference>
<dbReference type="GO" id="GO:0005737">
    <property type="term" value="C:cytoplasm"/>
    <property type="evidence" value="ECO:0007669"/>
    <property type="project" value="UniProtKB-SubCell"/>
</dbReference>
<dbReference type="GO" id="GO:0009380">
    <property type="term" value="C:excinuclease repair complex"/>
    <property type="evidence" value="ECO:0007669"/>
    <property type="project" value="InterPro"/>
</dbReference>
<dbReference type="GO" id="GO:0005524">
    <property type="term" value="F:ATP binding"/>
    <property type="evidence" value="ECO:0007669"/>
    <property type="project" value="UniProtKB-UniRule"/>
</dbReference>
<dbReference type="GO" id="GO:0016887">
    <property type="term" value="F:ATP hydrolysis activity"/>
    <property type="evidence" value="ECO:0007669"/>
    <property type="project" value="InterPro"/>
</dbReference>
<dbReference type="GO" id="GO:0003677">
    <property type="term" value="F:DNA binding"/>
    <property type="evidence" value="ECO:0007669"/>
    <property type="project" value="UniProtKB-UniRule"/>
</dbReference>
<dbReference type="GO" id="GO:0009381">
    <property type="term" value="F:excinuclease ABC activity"/>
    <property type="evidence" value="ECO:0007669"/>
    <property type="project" value="UniProtKB-UniRule"/>
</dbReference>
<dbReference type="GO" id="GO:0008270">
    <property type="term" value="F:zinc ion binding"/>
    <property type="evidence" value="ECO:0007669"/>
    <property type="project" value="UniProtKB-UniRule"/>
</dbReference>
<dbReference type="GO" id="GO:0006289">
    <property type="term" value="P:nucleotide-excision repair"/>
    <property type="evidence" value="ECO:0007669"/>
    <property type="project" value="UniProtKB-UniRule"/>
</dbReference>
<dbReference type="GO" id="GO:0009432">
    <property type="term" value="P:SOS response"/>
    <property type="evidence" value="ECO:0007669"/>
    <property type="project" value="UniProtKB-UniRule"/>
</dbReference>
<dbReference type="CDD" id="cd03270">
    <property type="entry name" value="ABC_UvrA_I"/>
    <property type="match status" value="1"/>
</dbReference>
<dbReference type="CDD" id="cd03271">
    <property type="entry name" value="ABC_UvrA_II"/>
    <property type="match status" value="1"/>
</dbReference>
<dbReference type="FunFam" id="1.20.1580.10:FF:000002">
    <property type="entry name" value="UvrABC system protein A"/>
    <property type="match status" value="1"/>
</dbReference>
<dbReference type="Gene3D" id="1.10.8.280">
    <property type="entry name" value="ABC transporter ATPase domain-like"/>
    <property type="match status" value="1"/>
</dbReference>
<dbReference type="Gene3D" id="1.20.1580.10">
    <property type="entry name" value="ABC transporter ATPase like domain"/>
    <property type="match status" value="2"/>
</dbReference>
<dbReference type="Gene3D" id="3.30.1490.20">
    <property type="entry name" value="ATP-grasp fold, A domain"/>
    <property type="match status" value="1"/>
</dbReference>
<dbReference type="Gene3D" id="3.40.50.300">
    <property type="entry name" value="P-loop containing nucleotide triphosphate hydrolases"/>
    <property type="match status" value="2"/>
</dbReference>
<dbReference type="HAMAP" id="MF_00205">
    <property type="entry name" value="UvrA"/>
    <property type="match status" value="1"/>
</dbReference>
<dbReference type="InterPro" id="IPR003439">
    <property type="entry name" value="ABC_transporter-like_ATP-bd"/>
</dbReference>
<dbReference type="InterPro" id="IPR017871">
    <property type="entry name" value="ABC_transporter-like_CS"/>
</dbReference>
<dbReference type="InterPro" id="IPR013815">
    <property type="entry name" value="ATP_grasp_subdomain_1"/>
</dbReference>
<dbReference type="InterPro" id="IPR027417">
    <property type="entry name" value="P-loop_NTPase"/>
</dbReference>
<dbReference type="InterPro" id="IPR004602">
    <property type="entry name" value="UvrA"/>
</dbReference>
<dbReference type="InterPro" id="IPR041552">
    <property type="entry name" value="UvrA_DNA-bd"/>
</dbReference>
<dbReference type="InterPro" id="IPR041102">
    <property type="entry name" value="UvrA_inter"/>
</dbReference>
<dbReference type="NCBIfam" id="NF001503">
    <property type="entry name" value="PRK00349.1"/>
    <property type="match status" value="1"/>
</dbReference>
<dbReference type="NCBIfam" id="TIGR00630">
    <property type="entry name" value="uvra"/>
    <property type="match status" value="1"/>
</dbReference>
<dbReference type="PANTHER" id="PTHR43152">
    <property type="entry name" value="UVRABC SYSTEM PROTEIN A"/>
    <property type="match status" value="1"/>
</dbReference>
<dbReference type="PANTHER" id="PTHR43152:SF3">
    <property type="entry name" value="UVRABC SYSTEM PROTEIN A"/>
    <property type="match status" value="1"/>
</dbReference>
<dbReference type="Pfam" id="PF17755">
    <property type="entry name" value="UvrA_DNA-bind"/>
    <property type="match status" value="1"/>
</dbReference>
<dbReference type="Pfam" id="PF17760">
    <property type="entry name" value="UvrA_inter"/>
    <property type="match status" value="1"/>
</dbReference>
<dbReference type="SUPFAM" id="SSF52540">
    <property type="entry name" value="P-loop containing nucleoside triphosphate hydrolases"/>
    <property type="match status" value="2"/>
</dbReference>
<dbReference type="PROSITE" id="PS00211">
    <property type="entry name" value="ABC_TRANSPORTER_1"/>
    <property type="match status" value="2"/>
</dbReference>
<dbReference type="PROSITE" id="PS50893">
    <property type="entry name" value="ABC_TRANSPORTER_2"/>
    <property type="match status" value="1"/>
</dbReference>
<sequence length="974" mass="107423">MSDQKFISIRGAREHNLKNVDLDLPRDKLIVMTGLSGSGKSSLAFDTIYAEGQRRYVESLSAYARQFLEMMQKPDVDQIDGLSPAISIEQKTTSRNPRSTVGTVTEIYDYMRLLFARVGIPYSPATGLPIESQTVSQMVDRVIALEEGTRLYILAPIVRGRKGEYRKELAELQKKGFQRVKVDGTFYEIADVPPLDKKYKHDIDVVVDRVVVRPDLSTRLADSLETCLKLADGLAIAEFADKPLPVGETAEGGSANKSANETHERILFSEKFACPVSGFTIPEIEPRLFSFNNPFGACPTCDGLGTQQAIDPNLIIPDESAALKDGAVAPWARSSSPYYNQTLEALGKAYGFKVSARWSELSEEARQAILYGTKGREITFHYDDGLRSYQTTKPFEGVIPNLERRWKETDSAWSREEIERFMASTPCPACNGYRLKPEALSVKIGKKHIGEITEMSIRKADAWFRDIDGSFNEKQREIAARILKAIRERLQFLNNVGLDYLTLARNSGTLSGGESQRIRLASQIGSGLTGVLYVLDEPSIGLHQRDNARLLDTLRHLRDLGNTVIVVEHDEDAILTADYVVDIGPAAGVHGGKVIAQGSPQDIMANTNSLTGKYLSGAMEVAVPAERRKISKTKRLRVVGARGNNLKNVSADIPLGTFTAVTGVSGGGKSTFLIETLFKAASRRIMGSREHPAEHDRIEGLEFLDKVIDIDQSPIGRTPRSNPATYTGAFTPIRDWFAGLPEAKARGYQPGRFSFNVKGGRCEACQGDGVIKIEMHFLPDVYVTCDVCHGKRYNRETLDVLFKGKSIADVLDMTVEEGAEFFSAVPAVRDKLETLVKVGLGYIKVGQQATTLSGGEAQRVKLAKELSRRATGRTLYILDEPTTGLHFHDVAKLLEVLHELVEQGNTVVVIEHNLEVIKTADWVIDLGPEGGDGGGEIVAVGRPEDIVQEKRSYTGQFLKELLERRPKRSSQAAE</sequence>
<protein>
    <recommendedName>
        <fullName evidence="1">UvrABC system protein A</fullName>
        <shortName evidence="1">UvrA protein</shortName>
    </recommendedName>
    <alternativeName>
        <fullName evidence="1">Excinuclease ABC subunit A</fullName>
    </alternativeName>
</protein>
<organism>
    <name type="scientific">Brucella abortus biovar 1 (strain 9-941)</name>
    <dbReference type="NCBI Taxonomy" id="262698"/>
    <lineage>
        <taxon>Bacteria</taxon>
        <taxon>Pseudomonadati</taxon>
        <taxon>Pseudomonadota</taxon>
        <taxon>Alphaproteobacteria</taxon>
        <taxon>Hyphomicrobiales</taxon>
        <taxon>Brucellaceae</taxon>
        <taxon>Brucella/Ochrobactrum group</taxon>
        <taxon>Brucella</taxon>
    </lineage>
</organism>
<comment type="function">
    <text evidence="1">The UvrABC repair system catalyzes the recognition and processing of DNA lesions. UvrA is an ATPase and a DNA-binding protein. A damage recognition complex composed of 2 UvrA and 2 UvrB subunits scans DNA for abnormalities. When the presence of a lesion has been verified by UvrB, the UvrA molecules dissociate.</text>
</comment>
<comment type="subunit">
    <text evidence="1">Forms a heterotetramer with UvrB during the search for lesions.</text>
</comment>
<comment type="subcellular location">
    <subcellularLocation>
        <location evidence="1">Cytoplasm</location>
    </subcellularLocation>
</comment>
<comment type="similarity">
    <text evidence="1">Belongs to the ABC transporter superfamily. UvrA family.</text>
</comment>